<evidence type="ECO:0000255" key="1">
    <source>
        <dbReference type="HAMAP-Rule" id="MF_00918"/>
    </source>
</evidence>
<keyword id="KW-0963">Cytoplasm</keyword>
<keyword id="KW-0238">DNA-binding</keyword>
<keyword id="KW-0804">Transcription</keyword>
<keyword id="KW-0805">Transcription regulation</keyword>
<gene>
    <name type="ordered locus">SaurJH9_0693</name>
</gene>
<dbReference type="EMBL" id="CP000703">
    <property type="protein sequence ID" value="ABQ48496.1"/>
    <property type="molecule type" value="Genomic_DNA"/>
</dbReference>
<dbReference type="RefSeq" id="WP_000532966.1">
    <property type="nucleotide sequence ID" value="NC_009487.1"/>
</dbReference>
<dbReference type="SMR" id="A5IQM3"/>
<dbReference type="KEGG" id="saj:SaurJH9_0693"/>
<dbReference type="HOGENOM" id="CLU_062974_2_0_9"/>
<dbReference type="GO" id="GO:0005829">
    <property type="term" value="C:cytosol"/>
    <property type="evidence" value="ECO:0007669"/>
    <property type="project" value="TreeGrafter"/>
</dbReference>
<dbReference type="GO" id="GO:0003677">
    <property type="term" value="F:DNA binding"/>
    <property type="evidence" value="ECO:0007669"/>
    <property type="project" value="UniProtKB-UniRule"/>
</dbReference>
<dbReference type="GO" id="GO:0006355">
    <property type="term" value="P:regulation of DNA-templated transcription"/>
    <property type="evidence" value="ECO:0007669"/>
    <property type="project" value="UniProtKB-UniRule"/>
</dbReference>
<dbReference type="FunFam" id="1.10.10.200:FF:000003">
    <property type="entry name" value="Probable transcriptional regulatory protein YeeN"/>
    <property type="match status" value="1"/>
</dbReference>
<dbReference type="Gene3D" id="1.10.10.200">
    <property type="match status" value="1"/>
</dbReference>
<dbReference type="Gene3D" id="3.30.70.980">
    <property type="match status" value="2"/>
</dbReference>
<dbReference type="HAMAP" id="MF_00693">
    <property type="entry name" value="Transcrip_reg_TACO1"/>
    <property type="match status" value="1"/>
</dbReference>
<dbReference type="HAMAP" id="MF_00918">
    <property type="entry name" value="Transcrip_reg_TACO1_YeeN"/>
    <property type="match status" value="1"/>
</dbReference>
<dbReference type="InterPro" id="IPR017856">
    <property type="entry name" value="Integrase-like_N"/>
</dbReference>
<dbReference type="InterPro" id="IPR048300">
    <property type="entry name" value="TACO1_YebC-like_2nd/3rd_dom"/>
</dbReference>
<dbReference type="InterPro" id="IPR049083">
    <property type="entry name" value="TACO1_YebC_N"/>
</dbReference>
<dbReference type="InterPro" id="IPR002876">
    <property type="entry name" value="Transcrip_reg_TACO1-like"/>
</dbReference>
<dbReference type="InterPro" id="IPR026564">
    <property type="entry name" value="Transcrip_reg_TACO1-like_dom3"/>
</dbReference>
<dbReference type="InterPro" id="IPR026562">
    <property type="entry name" value="Transcrip_reg_TACO1_YeeN"/>
</dbReference>
<dbReference type="InterPro" id="IPR029072">
    <property type="entry name" value="YebC-like"/>
</dbReference>
<dbReference type="NCBIfam" id="NF001030">
    <property type="entry name" value="PRK00110.1"/>
    <property type="match status" value="1"/>
</dbReference>
<dbReference type="NCBIfam" id="NF009044">
    <property type="entry name" value="PRK12378.1"/>
    <property type="match status" value="1"/>
</dbReference>
<dbReference type="NCBIfam" id="TIGR01033">
    <property type="entry name" value="YebC/PmpR family DNA-binding transcriptional regulator"/>
    <property type="match status" value="1"/>
</dbReference>
<dbReference type="PANTHER" id="PTHR12532">
    <property type="entry name" value="TRANSLATIONAL ACTIVATOR OF CYTOCHROME C OXIDASE 1"/>
    <property type="match status" value="1"/>
</dbReference>
<dbReference type="PANTHER" id="PTHR12532:SF0">
    <property type="entry name" value="TRANSLATIONAL ACTIVATOR OF CYTOCHROME C OXIDASE 1"/>
    <property type="match status" value="1"/>
</dbReference>
<dbReference type="Pfam" id="PF20772">
    <property type="entry name" value="TACO1_YebC_N"/>
    <property type="match status" value="1"/>
</dbReference>
<dbReference type="Pfam" id="PF01709">
    <property type="entry name" value="Transcrip_reg"/>
    <property type="match status" value="1"/>
</dbReference>
<dbReference type="SUPFAM" id="SSF75625">
    <property type="entry name" value="YebC-like"/>
    <property type="match status" value="1"/>
</dbReference>
<organism>
    <name type="scientific">Staphylococcus aureus (strain JH9)</name>
    <dbReference type="NCBI Taxonomy" id="359786"/>
    <lineage>
        <taxon>Bacteria</taxon>
        <taxon>Bacillati</taxon>
        <taxon>Bacillota</taxon>
        <taxon>Bacilli</taxon>
        <taxon>Bacillales</taxon>
        <taxon>Staphylococcaceae</taxon>
        <taxon>Staphylococcus</taxon>
    </lineage>
</organism>
<name>Y693_STAA9</name>
<protein>
    <recommendedName>
        <fullName evidence="1">Probable transcriptional regulatory protein SaurJH9_0693</fullName>
    </recommendedName>
</protein>
<sequence length="238" mass="26320">MGRKWNNIKEKKAQKDKNTSRIYAKFGKEIYVAAKSGEPNPESNQALRLVLERAKTYSVPNHIIEKAIDKAKGAGDENFDHLRYEGFGPSGSMLIVDALTNNVNRTASDVRAAFGKNGGNMGVSGSVAYMFDHVATFGIEGKSVDEILETLMEQDVDVNDVIDDNGLTIVYAEPDQFAVVQDALRAAGVEEFKVAEFEMLPQTDIELSEADQVTFEKLIDALEDLEDVQNVFHNVDLK</sequence>
<accession>A5IQM3</accession>
<feature type="chain" id="PRO_1000083172" description="Probable transcriptional regulatory protein SaurJH9_0693">
    <location>
        <begin position="1"/>
        <end position="238"/>
    </location>
</feature>
<proteinExistence type="inferred from homology"/>
<comment type="subcellular location">
    <subcellularLocation>
        <location evidence="1">Cytoplasm</location>
    </subcellularLocation>
</comment>
<comment type="similarity">
    <text evidence="1">Belongs to the TACO1 family. YeeN subfamily.</text>
</comment>
<reference key="1">
    <citation type="submission" date="2007-05" db="EMBL/GenBank/DDBJ databases">
        <title>Complete sequence of chromosome of Staphylococcus aureus subsp. aureus JH9.</title>
        <authorList>
            <consortium name="US DOE Joint Genome Institute"/>
            <person name="Copeland A."/>
            <person name="Lucas S."/>
            <person name="Lapidus A."/>
            <person name="Barry K."/>
            <person name="Detter J.C."/>
            <person name="Glavina del Rio T."/>
            <person name="Hammon N."/>
            <person name="Israni S."/>
            <person name="Pitluck S."/>
            <person name="Chain P."/>
            <person name="Malfatti S."/>
            <person name="Shin M."/>
            <person name="Vergez L."/>
            <person name="Schmutz J."/>
            <person name="Larimer F."/>
            <person name="Land M."/>
            <person name="Hauser L."/>
            <person name="Kyrpides N."/>
            <person name="Kim E."/>
            <person name="Tomasz A."/>
            <person name="Richardson P."/>
        </authorList>
    </citation>
    <scope>NUCLEOTIDE SEQUENCE [LARGE SCALE GENOMIC DNA]</scope>
    <source>
        <strain>JH9</strain>
    </source>
</reference>